<accession>P0C5F9</accession>
<dbReference type="SMR" id="P0C5F9"/>
<dbReference type="GO" id="GO:0005576">
    <property type="term" value="C:extracellular region"/>
    <property type="evidence" value="ECO:0007669"/>
    <property type="project" value="UniProtKB-SubCell"/>
</dbReference>
<dbReference type="GO" id="GO:0042151">
    <property type="term" value="C:nematocyst"/>
    <property type="evidence" value="ECO:0007669"/>
    <property type="project" value="UniProtKB-SubCell"/>
</dbReference>
<dbReference type="GO" id="GO:0017080">
    <property type="term" value="F:sodium channel regulator activity"/>
    <property type="evidence" value="ECO:0007669"/>
    <property type="project" value="UniProtKB-KW"/>
</dbReference>
<dbReference type="GO" id="GO:0090729">
    <property type="term" value="F:toxin activity"/>
    <property type="evidence" value="ECO:0007669"/>
    <property type="project" value="UniProtKB-KW"/>
</dbReference>
<dbReference type="GO" id="GO:0009966">
    <property type="term" value="P:regulation of signal transduction"/>
    <property type="evidence" value="ECO:0007669"/>
    <property type="project" value="InterPro"/>
</dbReference>
<dbReference type="Gene3D" id="2.20.20.10">
    <property type="entry name" value="Anthopleurin-A"/>
    <property type="match status" value="1"/>
</dbReference>
<dbReference type="InterPro" id="IPR000693">
    <property type="entry name" value="Anenome_toxin"/>
</dbReference>
<dbReference type="InterPro" id="IPR023355">
    <property type="entry name" value="Myo_ane_neurotoxin_sf"/>
</dbReference>
<dbReference type="Pfam" id="PF00706">
    <property type="entry name" value="Toxin_4"/>
    <property type="match status" value="1"/>
</dbReference>
<dbReference type="PIRSF" id="PIRSF001905">
    <property type="entry name" value="Anenome_toxin"/>
    <property type="match status" value="1"/>
</dbReference>
<dbReference type="SUPFAM" id="SSF57392">
    <property type="entry name" value="Defensin-like"/>
    <property type="match status" value="1"/>
</dbReference>
<protein>
    <recommendedName>
        <fullName evidence="2">Delta-actitoxin-Axm1e</fullName>
        <shortName evidence="2">Delta-AITX-Axm1e</shortName>
    </recommendedName>
    <alternativeName>
        <fullName evidence="3">PCR2-5</fullName>
    </alternativeName>
    <alternativeName>
        <fullName evidence="4">Toxin PCR2</fullName>
    </alternativeName>
</protein>
<organism>
    <name type="scientific">Anthopleura xanthogrammica</name>
    <name type="common">Giant green sea anemone</name>
    <name type="synonym">Actinia xanthogrammica</name>
    <dbReference type="NCBI Taxonomy" id="6112"/>
    <lineage>
        <taxon>Eukaryota</taxon>
        <taxon>Metazoa</taxon>
        <taxon>Cnidaria</taxon>
        <taxon>Anthozoa</taxon>
        <taxon>Hexacorallia</taxon>
        <taxon>Actiniaria</taxon>
        <taxon>Actiniidae</taxon>
        <taxon>Anthopleura</taxon>
    </lineage>
</organism>
<keyword id="KW-0123">Cardiotoxin</keyword>
<keyword id="KW-1015">Disulfide bond</keyword>
<keyword id="KW-0872">Ion channel impairing toxin</keyword>
<keyword id="KW-0166">Nematocyst</keyword>
<keyword id="KW-0528">Neurotoxin</keyword>
<keyword id="KW-0964">Secreted</keyword>
<keyword id="KW-0800">Toxin</keyword>
<keyword id="KW-0738">Voltage-gated sodium channel impairing toxin</keyword>
<comment type="function">
    <text evidence="1">Binds specifically to voltage-gated sodium channels (Nav), thereby delaying their inactivation. This toxin is active on a variety of voltage-gated sodium channels (Nav1.1/SCN1A, Nav1.2/SCN2A, Nav1.3/SCN3A, Nav1.4/SCN4A, Nav1.5/SCN5A and Nav1.6/SCN8A).</text>
</comment>
<comment type="subcellular location">
    <subcellularLocation>
        <location evidence="1">Secreted</location>
    </subcellularLocation>
    <subcellularLocation>
        <location evidence="1">Nematocyst</location>
    </subcellularLocation>
</comment>
<comment type="similarity">
    <text evidence="4">Belongs to the sea anemone sodium channel inhibitory toxin family. Type I subfamily.</text>
</comment>
<proteinExistence type="evidence at transcript level"/>
<evidence type="ECO:0000250" key="1">
    <source>
        <dbReference type="UniProtKB" id="P10454"/>
    </source>
</evidence>
<evidence type="ECO:0000303" key="2">
    <source>
    </source>
</evidence>
<evidence type="ECO:0000303" key="3">
    <source>
    </source>
</evidence>
<evidence type="ECO:0000305" key="4"/>
<name>NA12_ANTXA</name>
<sequence length="47" mass="4773">GVACLCDADGPSVSGNTLSGILWLAGCPSGWHNCKAHGPTIGWCCKK</sequence>
<feature type="chain" id="PRO_0000305113" description="Delta-actitoxin-Axm1e">
    <location>
        <begin position="1"/>
        <end position="47"/>
    </location>
</feature>
<feature type="disulfide bond" evidence="1">
    <location>
        <begin position="4"/>
        <end position="44"/>
    </location>
</feature>
<feature type="disulfide bond" evidence="1">
    <location>
        <begin position="6"/>
        <end position="34"/>
    </location>
</feature>
<feature type="disulfide bond" evidence="1">
    <location>
        <begin position="27"/>
        <end position="45"/>
    </location>
</feature>
<reference key="1">
    <citation type="journal article" date="1998" name="Toxicon">
        <title>Identification and characterization of novel sodium channel toxins from the sea anemone Anthopleura xanthogrammica.</title>
        <authorList>
            <person name="Kelso G.J."/>
            <person name="Blumenthal K.M."/>
        </authorList>
    </citation>
    <scope>NUCLEOTIDE SEQUENCE [MRNA]</scope>
    <source>
        <tissue>Tentacle</tissue>
    </source>
</reference>
<reference key="2">
    <citation type="journal article" date="2012" name="Toxicon">
        <title>Development of a rational nomenclature for naming peptide and protein toxins from sea anemones.</title>
        <authorList>
            <person name="Oliveira J.S."/>
            <person name="Fuentes-Silva D."/>
            <person name="King G.F."/>
        </authorList>
    </citation>
    <scope>NOMENCLATURE</scope>
</reference>